<dbReference type="EMBL" id="CR857537">
    <property type="protein sequence ID" value="CAH89816.1"/>
    <property type="molecule type" value="mRNA"/>
</dbReference>
<dbReference type="RefSeq" id="NP_001124839.1">
    <property type="nucleotide sequence ID" value="NM_001131367.1"/>
</dbReference>
<dbReference type="SMR" id="Q5REJ1"/>
<dbReference type="FunCoup" id="Q5REJ1">
    <property type="interactions" value="1518"/>
</dbReference>
<dbReference type="STRING" id="9601.ENSPPYP00000013437"/>
<dbReference type="Ensembl" id="ENSPPYT00000013986.2">
    <property type="protein sequence ID" value="ENSPPYP00000013437.1"/>
    <property type="gene ID" value="ENSPPYG00000012051.2"/>
</dbReference>
<dbReference type="GeneID" id="100171699"/>
<dbReference type="KEGG" id="pon:100171699"/>
<dbReference type="CTD" id="64969"/>
<dbReference type="eggNOG" id="KOG2646">
    <property type="taxonomic scope" value="Eukaryota"/>
</dbReference>
<dbReference type="GeneTree" id="ENSGT00390000001878"/>
<dbReference type="HOGENOM" id="CLU_050434_0_0_1"/>
<dbReference type="InParanoid" id="Q5REJ1"/>
<dbReference type="OMA" id="LICHRAI"/>
<dbReference type="OrthoDB" id="309483at2759"/>
<dbReference type="TreeFam" id="TF313823"/>
<dbReference type="Proteomes" id="UP000001595">
    <property type="component" value="Chromosome 2A"/>
</dbReference>
<dbReference type="GO" id="GO:0005763">
    <property type="term" value="C:mitochondrial small ribosomal subunit"/>
    <property type="evidence" value="ECO:0000250"/>
    <property type="project" value="UniProtKB"/>
</dbReference>
<dbReference type="GO" id="GO:0003723">
    <property type="term" value="F:RNA binding"/>
    <property type="evidence" value="ECO:0007669"/>
    <property type="project" value="InterPro"/>
</dbReference>
<dbReference type="GO" id="GO:0003735">
    <property type="term" value="F:structural constituent of ribosome"/>
    <property type="evidence" value="ECO:0007669"/>
    <property type="project" value="InterPro"/>
</dbReference>
<dbReference type="GO" id="GO:0006412">
    <property type="term" value="P:translation"/>
    <property type="evidence" value="ECO:0007669"/>
    <property type="project" value="InterPro"/>
</dbReference>
<dbReference type="FunFam" id="3.30.160.20:FF:000022">
    <property type="entry name" value="28S ribosomal protein S5, mitochondrial"/>
    <property type="match status" value="1"/>
</dbReference>
<dbReference type="FunFam" id="3.30.230.10:FF:000002">
    <property type="entry name" value="30S ribosomal protein S5"/>
    <property type="match status" value="1"/>
</dbReference>
<dbReference type="Gene3D" id="3.30.160.20">
    <property type="match status" value="1"/>
</dbReference>
<dbReference type="Gene3D" id="3.30.230.10">
    <property type="match status" value="1"/>
</dbReference>
<dbReference type="InterPro" id="IPR020568">
    <property type="entry name" value="Ribosomal_Su5_D2-typ_SF"/>
</dbReference>
<dbReference type="InterPro" id="IPR000851">
    <property type="entry name" value="Ribosomal_uS5"/>
</dbReference>
<dbReference type="InterPro" id="IPR005324">
    <property type="entry name" value="Ribosomal_uS5_C"/>
</dbReference>
<dbReference type="InterPro" id="IPR013810">
    <property type="entry name" value="Ribosomal_uS5_N"/>
</dbReference>
<dbReference type="InterPro" id="IPR018192">
    <property type="entry name" value="Ribosomal_uS5_N_CS"/>
</dbReference>
<dbReference type="InterPro" id="IPR048584">
    <property type="entry name" value="Ribosomal_uS5m_N"/>
</dbReference>
<dbReference type="InterPro" id="IPR014721">
    <property type="entry name" value="Ribsml_uS5_D2-typ_fold_subgr"/>
</dbReference>
<dbReference type="PANTHER" id="PTHR48277">
    <property type="entry name" value="MITOCHONDRIAL RIBOSOMAL PROTEIN S5"/>
    <property type="match status" value="1"/>
</dbReference>
<dbReference type="PANTHER" id="PTHR48277:SF1">
    <property type="entry name" value="MITOCHONDRIAL RIBOSOMAL PROTEIN S5"/>
    <property type="match status" value="1"/>
</dbReference>
<dbReference type="Pfam" id="PF00333">
    <property type="entry name" value="Ribosomal_S5"/>
    <property type="match status" value="1"/>
</dbReference>
<dbReference type="Pfam" id="PF03719">
    <property type="entry name" value="Ribosomal_S5_C"/>
    <property type="match status" value="1"/>
</dbReference>
<dbReference type="Pfam" id="PF21251">
    <property type="entry name" value="Ribosomal_uS5m_N"/>
    <property type="match status" value="1"/>
</dbReference>
<dbReference type="SUPFAM" id="SSF54768">
    <property type="entry name" value="dsRNA-binding domain-like"/>
    <property type="match status" value="1"/>
</dbReference>
<dbReference type="SUPFAM" id="SSF54211">
    <property type="entry name" value="Ribosomal protein S5 domain 2-like"/>
    <property type="match status" value="1"/>
</dbReference>
<dbReference type="PROSITE" id="PS00585">
    <property type="entry name" value="RIBOSOMAL_S5"/>
    <property type="match status" value="1"/>
</dbReference>
<dbReference type="PROSITE" id="PS50881">
    <property type="entry name" value="S5_DSRBD"/>
    <property type="match status" value="1"/>
</dbReference>
<proteinExistence type="evidence at transcript level"/>
<sequence>MATAVRAVGCLPVLCSGTAGHLLRRQHSLNTLPAASILAWKSVLSNGHLSSLGTRDTHPYASLSRALQTQCCISSPSHLMSQQYRPYSFFTKLTADELWKGALAETGAGAKKGRGKRTKKKKRKDLNRGQIIGEGRYGFLWPGLNVPVMKNGTVQTIAQRSKEEQEKVEADVIQQREEWERKKKMKVKRERGWSGNSWGGLSLGPPDPGPSGETYEDFDTRILEVRNVFTMTAKEGRRKSIRVLVAVGNGKGAAGFAIGKATDRMDAFRKAKNRAVHHLYYIERYEDHTIFHDISLRFKRTHIKMKKQPKGYGLRCHRAIITICRLIGIKDMYAKVSGSTNMLSLTQGLFHGLSRQETHQQLADKKGLHVVEIREECGPLPIVVASPRGALRKDPEPDEVPDIKLDWEDVKTAQGMKRCVWSNLKRAAT</sequence>
<name>RT05_PONAB</name>
<evidence type="ECO:0000250" key="1">
    <source>
        <dbReference type="UniProtKB" id="P82675"/>
    </source>
</evidence>
<evidence type="ECO:0000255" key="2">
    <source>
        <dbReference type="PROSITE-ProRule" id="PRU00268"/>
    </source>
</evidence>
<evidence type="ECO:0000256" key="3">
    <source>
        <dbReference type="SAM" id="MobiDB-lite"/>
    </source>
</evidence>
<evidence type="ECO:0000305" key="4"/>
<gene>
    <name type="primary">MRPS5</name>
</gene>
<feature type="chain" id="PRO_0000262920" description="Small ribosomal subunit protein uS5m">
    <location>
        <begin position="1"/>
        <end position="429"/>
    </location>
</feature>
<feature type="domain" description="S5 DRBM" evidence="2">
    <location>
        <begin position="218"/>
        <end position="282"/>
    </location>
</feature>
<feature type="region of interest" description="Disordered" evidence="3">
    <location>
        <begin position="108"/>
        <end position="127"/>
    </location>
</feature>
<feature type="compositionally biased region" description="Basic residues" evidence="3">
    <location>
        <begin position="111"/>
        <end position="125"/>
    </location>
</feature>
<reference key="1">
    <citation type="submission" date="2004-11" db="EMBL/GenBank/DDBJ databases">
        <authorList>
            <consortium name="The German cDNA consortium"/>
        </authorList>
    </citation>
    <scope>NUCLEOTIDE SEQUENCE [LARGE SCALE MRNA]</scope>
    <source>
        <tissue>Heart</tissue>
    </source>
</reference>
<protein>
    <recommendedName>
        <fullName evidence="4">Small ribosomal subunit protein uS5m</fullName>
    </recommendedName>
    <alternativeName>
        <fullName>28S ribosomal protein S5, mitochondrial</fullName>
        <shortName>MRP-S5</shortName>
        <shortName>S5mt</shortName>
    </alternativeName>
</protein>
<keyword id="KW-0496">Mitochondrion</keyword>
<keyword id="KW-1185">Reference proteome</keyword>
<keyword id="KW-0687">Ribonucleoprotein</keyword>
<keyword id="KW-0689">Ribosomal protein</keyword>
<organism>
    <name type="scientific">Pongo abelii</name>
    <name type="common">Sumatran orangutan</name>
    <name type="synonym">Pongo pygmaeus abelii</name>
    <dbReference type="NCBI Taxonomy" id="9601"/>
    <lineage>
        <taxon>Eukaryota</taxon>
        <taxon>Metazoa</taxon>
        <taxon>Chordata</taxon>
        <taxon>Craniata</taxon>
        <taxon>Vertebrata</taxon>
        <taxon>Euteleostomi</taxon>
        <taxon>Mammalia</taxon>
        <taxon>Eutheria</taxon>
        <taxon>Euarchontoglires</taxon>
        <taxon>Primates</taxon>
        <taxon>Haplorrhini</taxon>
        <taxon>Catarrhini</taxon>
        <taxon>Hominidae</taxon>
        <taxon>Pongo</taxon>
    </lineage>
</organism>
<comment type="subunit">
    <text evidence="1">Component of the mitochondrial ribosome small subunit (28S) which comprises a 12S rRNA and about 30 distinct proteins.</text>
</comment>
<comment type="subcellular location">
    <subcellularLocation>
        <location evidence="1">Mitochondrion</location>
    </subcellularLocation>
</comment>
<comment type="similarity">
    <text evidence="4">Belongs to the universal ribosomal protein uS5 family.</text>
</comment>
<accession>Q5REJ1</accession>